<feature type="chain" id="PRO_0000211384" description="Monocarboxylate transporter 1">
    <location>
        <begin position="1"/>
        <end position="494"/>
    </location>
</feature>
<feature type="topological domain" description="Cytoplasmic" evidence="13">
    <location>
        <begin position="1"/>
        <end position="22"/>
    </location>
</feature>
<feature type="transmembrane region" description="Helical; Name=1" evidence="1">
    <location>
        <begin position="23"/>
        <end position="44"/>
    </location>
</feature>
<feature type="topological domain" description="Extracellular" evidence="13">
    <location>
        <begin position="45"/>
        <end position="55"/>
    </location>
</feature>
<feature type="transmembrane region" description="Helical; Name=2" evidence="1">
    <location>
        <begin position="56"/>
        <end position="80"/>
    </location>
</feature>
<feature type="topological domain" description="Cytoplasmic" evidence="13">
    <location>
        <begin position="81"/>
        <end position="84"/>
    </location>
</feature>
<feature type="transmembrane region" description="Helical; Name=3" evidence="1">
    <location>
        <begin position="85"/>
        <end position="105"/>
    </location>
</feature>
<feature type="topological domain" description="Extracellular" evidence="13">
    <location>
        <begin position="106"/>
        <end position="109"/>
    </location>
</feature>
<feature type="transmembrane region" description="Helical; Name=4" evidence="1">
    <location>
        <begin position="110"/>
        <end position="132"/>
    </location>
</feature>
<feature type="topological domain" description="Cytoplasmic" evidence="13">
    <location>
        <begin position="133"/>
        <end position="146"/>
    </location>
</feature>
<feature type="transmembrane region" description="Helical; Name=5" evidence="1">
    <location>
        <begin position="147"/>
        <end position="169"/>
    </location>
</feature>
<feature type="topological domain" description="Extracellular" evidence="13">
    <location>
        <begin position="170"/>
        <end position="174"/>
    </location>
</feature>
<feature type="transmembrane region" description="Helical; Name=6" evidence="1">
    <location>
        <begin position="175"/>
        <end position="194"/>
    </location>
</feature>
<feature type="topological domain" description="Cytoplasmic" evidence="13">
    <location>
        <begin position="195"/>
        <end position="254"/>
    </location>
</feature>
<feature type="transmembrane region" description="Helical; Name=7" evidence="1">
    <location>
        <begin position="255"/>
        <end position="281"/>
    </location>
</feature>
<feature type="topological domain" description="Extracellular" evidence="13">
    <location>
        <begin position="282"/>
        <end position="288"/>
    </location>
</feature>
<feature type="transmembrane region" description="Helical; Name=8" evidence="1">
    <location>
        <begin position="289"/>
        <end position="310"/>
    </location>
</feature>
<feature type="topological domain" description="Cytoplasmic" evidence="13">
    <location>
        <begin position="311"/>
        <end position="321"/>
    </location>
</feature>
<feature type="transmembrane region" description="Helical; Name=9" evidence="1">
    <location>
        <begin position="322"/>
        <end position="342"/>
    </location>
</feature>
<feature type="topological domain" description="Extracellular" evidence="13">
    <location>
        <begin position="343"/>
        <end position="346"/>
    </location>
</feature>
<feature type="transmembrane region" description="Helical; Name=10" evidence="1">
    <location>
        <begin position="347"/>
        <end position="368"/>
    </location>
</feature>
<feature type="topological domain" description="Cytoplasmic" evidence="13">
    <location>
        <begin position="369"/>
        <end position="382"/>
    </location>
</feature>
<feature type="transmembrane region" description="Helical; Name=11" evidence="1">
    <location>
        <begin position="383"/>
        <end position="403"/>
    </location>
</feature>
<feature type="topological domain" description="Extracellular" evidence="13">
    <location>
        <begin position="404"/>
        <end position="414"/>
    </location>
</feature>
<feature type="transmembrane region" description="Helical; Name=12" evidence="1">
    <location>
        <begin position="415"/>
        <end position="436"/>
    </location>
</feature>
<feature type="topological domain" description="Cytoplasmic" evidence="13">
    <location>
        <begin position="437"/>
        <end position="494"/>
    </location>
</feature>
<feature type="region of interest" description="Disordered" evidence="3">
    <location>
        <begin position="446"/>
        <end position="494"/>
    </location>
</feature>
<feature type="compositionally biased region" description="Basic and acidic residues" evidence="3">
    <location>
        <begin position="446"/>
        <end position="472"/>
    </location>
</feature>
<feature type="compositionally biased region" description="Polar residues" evidence="3">
    <location>
        <begin position="473"/>
        <end position="485"/>
    </location>
</feature>
<feature type="binding site" evidence="1">
    <location>
        <position position="38"/>
    </location>
    <ligand>
        <name>(S)-lactate</name>
        <dbReference type="ChEBI" id="CHEBI:16651"/>
    </ligand>
</feature>
<feature type="binding site" evidence="1">
    <location>
        <position position="302"/>
    </location>
    <ligand>
        <name>H(+)</name>
        <dbReference type="ChEBI" id="CHEBI:15378"/>
    </ligand>
</feature>
<feature type="binding site" evidence="1">
    <location>
        <position position="306"/>
    </location>
    <ligand>
        <name>(S)-lactate</name>
        <dbReference type="ChEBI" id="CHEBI:16651"/>
    </ligand>
</feature>
<feature type="modified residue" description="Phosphoserine" evidence="16">
    <location>
        <position position="210"/>
    </location>
</feature>
<feature type="modified residue" description="Phosphoserine" evidence="15 16">
    <location>
        <position position="213"/>
    </location>
</feature>
<feature type="modified residue" description="Phosphoserine" evidence="16">
    <location>
        <position position="220"/>
    </location>
</feature>
<feature type="modified residue" description="Phosphothreonine" evidence="2">
    <location>
        <position position="224"/>
    </location>
</feature>
<feature type="modified residue" description="Phosphoserine" evidence="16">
    <location>
        <position position="230"/>
    </location>
</feature>
<feature type="modified residue" description="Phosphothreonine" evidence="1">
    <location>
        <position position="459"/>
    </location>
</feature>
<feature type="modified residue" description="Phosphoserine" evidence="16">
    <location>
        <position position="460"/>
    </location>
</feature>
<feature type="modified residue" description="Phosphothreonine" evidence="2">
    <location>
        <position position="461"/>
    </location>
</feature>
<feature type="modified residue" description="Phosphoserine" evidence="1">
    <location>
        <position position="476"/>
    </location>
</feature>
<feature type="modified residue" description="Phosphoserine" evidence="2">
    <location>
        <position position="483"/>
    </location>
</feature>
<feature type="modified residue" description="Phosphoserine" evidence="2">
    <location>
        <position position="484"/>
    </location>
</feature>
<feature type="modified residue" description="Phosphoserine" evidence="16">
    <location>
        <position position="492"/>
    </location>
</feature>
<feature type="mutagenesis site" description="No effect on expression at the cell membrane, but abolishes lactate transport across the cell membrane." evidence="8">
    <original>K</original>
    <variation>Q</variation>
    <variation>R</variation>
    <location>
        <position position="38"/>
    </location>
</feature>
<feature type="mutagenesis site" description="No effect on expression at the cell membrane. No effect on lactate transport across the cell membrane." evidence="8">
    <original>K</original>
    <variation>Q</variation>
    <variation>R</variation>
    <location>
        <position position="45"/>
    </location>
</feature>
<feature type="mutagenesis site" description="No effect on expression at the cell membrane. No effect on lactate transport across the cell membrane." evidence="7">
    <original>R</original>
    <variation>E</variation>
    <variation>Q</variation>
    <location>
        <position position="86"/>
    </location>
</feature>
<feature type="mutagenesis site" description="No effect on expression at the cell membrane. No effect on lactate transport across the cell membrane." evidence="7">
    <original>R</original>
    <variation>E</variation>
    <variation>Q</variation>
    <location>
        <position position="196"/>
    </location>
</feature>
<feature type="mutagenesis site" description="No effect on expression at the cell membrane. No effect on lactate transport across the cell membrane." evidence="8">
    <original>K</original>
    <variation>Q</variation>
    <variation>R</variation>
    <location>
        <position position="282"/>
    </location>
</feature>
<feature type="mutagenesis site" description="No effect on expression at the cell membrane. No effect on lactate transport across the cell membrane." evidence="8">
    <original>K</original>
    <variation>Q</variation>
    <variation>R</variation>
    <location>
        <position position="284"/>
    </location>
</feature>
<feature type="mutagenesis site" description="No effect on expression at the cell membrane. No effect on lactate transport across the cell membrane." evidence="8">
    <original>K</original>
    <variation>Q</variation>
    <variation>R</variation>
    <location>
        <position position="290"/>
    </location>
</feature>
<feature type="mutagenesis site" description="Abolishes expression at the cell membrane. Abolishes lactate transport across the cell membrane without affecting expression at the cell membrane; when associated with E-306." evidence="7">
    <original>D</original>
    <variation>R</variation>
    <location>
        <position position="302"/>
    </location>
</feature>
<feature type="mutagenesis site" description="Abolishes expression at the cell membrane. Abolishes lactate transport across the cell membrane without affecting expression at the cell membrane; when associated with R-302." evidence="7">
    <original>R</original>
    <variation>E</variation>
    <location>
        <position position="306"/>
    </location>
</feature>
<feature type="mutagenesis site" description="No effect on expression at the cell membrane, but abolishes lactate transport across the cell membrane." evidence="7">
    <original>R</original>
    <variation>K</variation>
    <location>
        <position position="306"/>
    </location>
</feature>
<feature type="mutagenesis site" description="No effect on expression at the cell membrane. No effect on lactate transport across the cell membrane." evidence="8">
    <original>K</original>
    <variation>Q</variation>
    <variation>R</variation>
    <location>
        <position position="413"/>
    </location>
</feature>
<proteinExistence type="evidence at protein level"/>
<reference key="1">
    <citation type="journal article" date="1995" name="Biochem. Biophys. Res. Commun.">
        <title>cDNA cloning and functional characterization of rat intestinal monocarboxylate transporter.</title>
        <authorList>
            <person name="Takanaga H."/>
            <person name="Tamai I."/>
            <person name="Inaba S."/>
            <person name="Sai Y."/>
            <person name="Higashida H."/>
            <person name="Yamamoto H."/>
            <person name="Tsuji A."/>
        </authorList>
    </citation>
    <scope>NUCLEOTIDE SEQUENCE [MRNA]</scope>
    <scope>FUNCTION</scope>
    <scope>TRANSPORTER ACTIVITY</scope>
    <scope>TISSUE SPECIFICITY</scope>
    <scope>SUBCELLULAR LOCATION</scope>
    <source>
        <strain>Wistar</strain>
        <tissue>Small intestine</tissue>
    </source>
</reference>
<reference key="2">
    <citation type="journal article" date="1995" name="Biochim. Biophys. Acta">
        <title>cDNA cloning of MCT1, a monocarboxylate transporter from rat skeletal muscle.</title>
        <authorList>
            <person name="Jackson V.N."/>
            <person name="Price N.T."/>
            <person name="Halestrap A.P."/>
        </authorList>
    </citation>
    <scope>NUCLEOTIDE SEQUENCE [MRNA]</scope>
    <source>
        <strain>Wistar</strain>
        <tissue>Skeletal muscle</tissue>
    </source>
</reference>
<reference key="3">
    <citation type="journal article" date="2004" name="Genome Res.">
        <title>The status, quality, and expansion of the NIH full-length cDNA project: the Mammalian Gene Collection (MGC).</title>
        <authorList>
            <consortium name="The MGC Project Team"/>
        </authorList>
    </citation>
    <scope>NUCLEOTIDE SEQUENCE [LARGE SCALE MRNA]</scope>
    <source>
        <tissue>Lung</tissue>
    </source>
</reference>
<reference key="4">
    <citation type="journal article" date="1999" name="Exp. Physiol.">
        <title>A monocarboxylate transporter MCT1 is located at the basolateral pole of rat jejunum.</title>
        <authorList>
            <person name="Orsenigo M.N."/>
            <person name="Tosco M."/>
            <person name="Bazzini C."/>
            <person name="Laforenza U."/>
            <person name="Faelli A."/>
        </authorList>
    </citation>
    <scope>NUCLEOTIDE SEQUENCE [MRNA] OF 264-472</scope>
    <scope>FUNCTION</scope>
    <scope>TRANSPORTER ACTIVITY</scope>
    <scope>TISSUE SPECIFICITY</scope>
    <scope>SUBCELLULAR LOCATION</scope>
    <source>
        <tissue>Jejunal epithelium</tissue>
    </source>
</reference>
<reference key="5">
    <citation type="journal article" date="1997" name="J. Biol. Chem.">
        <title>Interaction of the erythrocyte lactate transporter (monocarboxylate transporter 1) with an integral 70-kDa membrane glycoprotein of the immunoglobulin superfamily.</title>
        <authorList>
            <person name="Poole R.C."/>
            <person name="Halestrap A.P."/>
        </authorList>
    </citation>
    <scope>INTERACTION WITH EMB</scope>
    <scope>TISSUE SPECIFICITY</scope>
    <scope>SUBCELLULAR LOCATION</scope>
</reference>
<reference key="6">
    <citation type="journal article" date="1997" name="J. Biol. Chem.">
        <title>Comparison of lactate transport in astroglial cells and monocarboxylate transporter 1 (MCT 1) expressing Xenopus laevis oocytes. Expression of two different monocarboxylate transporters in astroglial cells and neurons.</title>
        <authorList>
            <person name="Broeer S."/>
            <person name="Rahman B."/>
            <person name="Pellegri G."/>
            <person name="Pellerin L."/>
            <person name="Martin J.L."/>
            <person name="Verleysdonk S."/>
            <person name="Hamprecht B."/>
            <person name="Magistretti P.J."/>
        </authorList>
    </citation>
    <scope>FUNCTION</scope>
    <scope>TRANSPORTER ACTIVITY</scope>
</reference>
<reference key="7">
    <citation type="journal article" date="1998" name="Biochem. J.">
        <title>Characterization of the monocarboxylate transporter 1 expressed in Xenopus laevis oocytes by changes in cytosolic pH.</title>
        <authorList>
            <person name="Broeer S."/>
            <person name="Schneider H.P."/>
            <person name="Broeer A."/>
            <person name="Rahman B."/>
            <person name="Hamprecht B."/>
            <person name="Deitmer J.W."/>
        </authorList>
    </citation>
    <scope>FUNCTION</scope>
    <scope>TRANSPORTER ACTIVITY</scope>
    <scope>BIOPHYSICOCHEMICAL PROPERTIES</scope>
</reference>
<reference key="8">
    <citation type="journal article" date="1999" name="Biochem. J.">
        <title>Characterization of the high-affinity monocarboxylate transporter MCT2 in Xenopus laevis oocytes.</title>
        <authorList>
            <person name="Broeer S."/>
            <person name="Broeer A."/>
            <person name="Schneider H.P."/>
            <person name="Stegen C."/>
            <person name="Halestrap A.P."/>
            <person name="Deitmer J.W."/>
        </authorList>
    </citation>
    <scope>FUNCTION</scope>
    <scope>TRANSPORTER ACTIVITY</scope>
    <scope>ACTIVITY REGULATION</scope>
</reference>
<reference key="9">
    <citation type="journal article" date="2002" name="J. Biol. Chem.">
        <title>Fluorescence resonance energy transfer studies on the interaction between the lactate transporter MCT1 and CD147 provide information on the topology and stoichiometry of the complex in situ.</title>
        <authorList>
            <person name="Wilson M.C."/>
            <person name="Meredith D."/>
            <person name="Halestrap A.P."/>
        </authorList>
    </citation>
    <scope>INTERACTION WITH BSG</scope>
    <scope>FUNCTION</scope>
    <scope>SUBCELLULAR LOCATION</scope>
</reference>
<reference key="10">
    <citation type="journal article" date="2006" name="J. Proteome Res.">
        <title>Phosphoproteomic analysis of rat liver by high capacity IMAC and LC-MS/MS.</title>
        <authorList>
            <person name="Moser K."/>
            <person name="White F.M."/>
        </authorList>
    </citation>
    <scope>PHOSPHORYLATION [LARGE SCALE ANALYSIS] AT SER-213</scope>
    <scope>IDENTIFICATION BY MASS SPECTROMETRY [LARGE SCALE ANALYSIS]</scope>
</reference>
<reference key="11">
    <citation type="journal article" date="2006" name="Mol. Membr. Biol.">
        <title>The role of charged residues in the transmembrane helices of monocarboxylate transporter 1 and its ancillary protein basigin in determining plasma membrane expression and catalytic activity.</title>
        <authorList>
            <person name="Manoharan C."/>
            <person name="Wilson M.C."/>
            <person name="Sessions R.B."/>
            <person name="Halestrap A.P."/>
        </authorList>
    </citation>
    <scope>FUNCTION</scope>
    <scope>TRANSPORTER ACTIVITY</scope>
    <scope>BIOPHYSICOCHEMICAL PROPERTIES</scope>
    <scope>SUBCELLULAR LOCATION</scope>
    <scope>INTERACTION WITH BSG</scope>
    <scope>3D-STRUCTURE MODELING</scope>
    <scope>MUTAGENESIS OF ARG-86; ARG-196; ASP-302 AND ARG-306</scope>
</reference>
<reference key="12">
    <citation type="journal article" date="2009" name="J. Biol. Chem.">
        <title>Studies on the DIDS-binding site of monocarboxylate transporter 1 suggest a homology model of the open conformation and a plausible translocation cycle.</title>
        <authorList>
            <person name="Wilson M.C."/>
            <person name="Meredith D."/>
            <person name="Bunnun C."/>
            <person name="Sessions R.B."/>
            <person name="Halestrap A.P."/>
        </authorList>
    </citation>
    <scope>FUNCTION</scope>
    <scope>TRANSPORTER ACTIVITY</scope>
    <scope>INTERACTION WITH EMB</scope>
    <scope>SUBCELLULAR LOCATION</scope>
    <scope>TOPOLOGY</scope>
    <scope>3D-STRUCTURE MODELING</scope>
    <scope>MUTAGENESIS OF LYS-38; LYS-45; LYS-282; LYS-284; LYS-290 AND LYS-413</scope>
    <scope>ACTIVITY REGULATION</scope>
    <scope>TISSUE SPECIFICITY</scope>
</reference>
<reference key="13">
    <citation type="journal article" date="2012" name="Nat. Commun.">
        <title>Quantitative maps of protein phosphorylation sites across 14 different rat organs and tissues.</title>
        <authorList>
            <person name="Lundby A."/>
            <person name="Secher A."/>
            <person name="Lage K."/>
            <person name="Nordsborg N.B."/>
            <person name="Dmytriyev A."/>
            <person name="Lundby C."/>
            <person name="Olsen J.V."/>
        </authorList>
    </citation>
    <scope>PHOSPHORYLATION [LARGE SCALE ANALYSIS] AT SER-210; SER-213; SER-220; SER-230; SER-460 AND SER-492</scope>
    <scope>IDENTIFICATION BY MASS SPECTROMETRY [LARGE SCALE ANALYSIS]</scope>
</reference>
<organism>
    <name type="scientific">Rattus norvegicus</name>
    <name type="common">Rat</name>
    <dbReference type="NCBI Taxonomy" id="10116"/>
    <lineage>
        <taxon>Eukaryota</taxon>
        <taxon>Metazoa</taxon>
        <taxon>Chordata</taxon>
        <taxon>Craniata</taxon>
        <taxon>Vertebrata</taxon>
        <taxon>Euteleostomi</taxon>
        <taxon>Mammalia</taxon>
        <taxon>Eutheria</taxon>
        <taxon>Euarchontoglires</taxon>
        <taxon>Glires</taxon>
        <taxon>Rodentia</taxon>
        <taxon>Myomorpha</taxon>
        <taxon>Muroidea</taxon>
        <taxon>Muridae</taxon>
        <taxon>Murinae</taxon>
        <taxon>Rattus</taxon>
    </lineage>
</organism>
<name>MOT1_RAT</name>
<evidence type="ECO:0000250" key="1">
    <source>
        <dbReference type="UniProtKB" id="P53985"/>
    </source>
</evidence>
<evidence type="ECO:0000250" key="2">
    <source>
        <dbReference type="UniProtKB" id="P53986"/>
    </source>
</evidence>
<evidence type="ECO:0000256" key="3">
    <source>
        <dbReference type="SAM" id="MobiDB-lite"/>
    </source>
</evidence>
<evidence type="ECO:0000269" key="4">
    <source>
    </source>
</evidence>
<evidence type="ECO:0000269" key="5">
    <source>
    </source>
</evidence>
<evidence type="ECO:0000269" key="6">
    <source>
    </source>
</evidence>
<evidence type="ECO:0000269" key="7">
    <source>
    </source>
</evidence>
<evidence type="ECO:0000269" key="8">
    <source>
    </source>
</evidence>
<evidence type="ECO:0000269" key="9">
    <source>
    </source>
</evidence>
<evidence type="ECO:0000269" key="10">
    <source>
    </source>
</evidence>
<evidence type="ECO:0000269" key="11">
    <source>
    </source>
</evidence>
<evidence type="ECO:0000269" key="12">
    <source>
    </source>
</evidence>
<evidence type="ECO:0000305" key="13"/>
<evidence type="ECO:0000305" key="14">
    <source>
    </source>
</evidence>
<evidence type="ECO:0007744" key="15">
    <source>
    </source>
</evidence>
<evidence type="ECO:0007744" key="16">
    <source>
    </source>
</evidence>
<accession>P53987</accession>
<dbReference type="EMBL" id="D63834">
    <property type="protein sequence ID" value="BAA09894.1"/>
    <property type="molecule type" value="mRNA"/>
</dbReference>
<dbReference type="EMBL" id="X86216">
    <property type="protein sequence ID" value="CAA60116.1"/>
    <property type="molecule type" value="mRNA"/>
</dbReference>
<dbReference type="EMBL" id="BC078877">
    <property type="protein sequence ID" value="AAH78877.1"/>
    <property type="molecule type" value="mRNA"/>
</dbReference>
<dbReference type="EMBL" id="AJ236865">
    <property type="protein sequence ID" value="CAB37948.1"/>
    <property type="molecule type" value="mRNA"/>
</dbReference>
<dbReference type="PIR" id="JC4399">
    <property type="entry name" value="JC4399"/>
</dbReference>
<dbReference type="RefSeq" id="NP_036848.1">
    <property type="nucleotide sequence ID" value="NM_012716.2"/>
</dbReference>
<dbReference type="RefSeq" id="XP_017446125.1">
    <property type="nucleotide sequence ID" value="XM_017590636.1"/>
</dbReference>
<dbReference type="RefSeq" id="XP_038957688.1">
    <property type="nucleotide sequence ID" value="XM_039101760.2"/>
</dbReference>
<dbReference type="RefSeq" id="XP_063137386.1">
    <property type="nucleotide sequence ID" value="XM_063281316.1"/>
</dbReference>
<dbReference type="SMR" id="P53987"/>
<dbReference type="BioGRID" id="247107">
    <property type="interactions" value="2"/>
</dbReference>
<dbReference type="FunCoup" id="P53987">
    <property type="interactions" value="1361"/>
</dbReference>
<dbReference type="IntAct" id="P53987">
    <property type="interactions" value="1"/>
</dbReference>
<dbReference type="STRING" id="10116.ENSRNOP00000027234"/>
<dbReference type="BindingDB" id="P53987"/>
<dbReference type="ChEMBL" id="CHEMBL2073709"/>
<dbReference type="iPTMnet" id="P53987"/>
<dbReference type="PhosphoSitePlus" id="P53987"/>
<dbReference type="jPOST" id="P53987"/>
<dbReference type="PaxDb" id="10116-ENSRNOP00000027234"/>
<dbReference type="Ensembl" id="ENSRNOT00000027234.6">
    <property type="protein sequence ID" value="ENSRNOP00000027234.3"/>
    <property type="gene ID" value="ENSRNOG00000019996.6"/>
</dbReference>
<dbReference type="GeneID" id="25027"/>
<dbReference type="KEGG" id="rno:25027"/>
<dbReference type="UCSC" id="RGD:3690">
    <property type="organism name" value="rat"/>
</dbReference>
<dbReference type="AGR" id="RGD:3690"/>
<dbReference type="CTD" id="6566"/>
<dbReference type="RGD" id="3690">
    <property type="gene designation" value="Slc16a1"/>
</dbReference>
<dbReference type="eggNOG" id="KOG2504">
    <property type="taxonomic scope" value="Eukaryota"/>
</dbReference>
<dbReference type="GeneTree" id="ENSGT00940000154955"/>
<dbReference type="HOGENOM" id="CLU_001265_59_1_1"/>
<dbReference type="InParanoid" id="P53987"/>
<dbReference type="OMA" id="EWAAFTE"/>
<dbReference type="OrthoDB" id="6499973at2759"/>
<dbReference type="PhylomeDB" id="P53987"/>
<dbReference type="TreeFam" id="TF313792"/>
<dbReference type="Reactome" id="R-RNO-210991">
    <property type="pathway name" value="Basigin interactions"/>
</dbReference>
<dbReference type="Reactome" id="R-RNO-433692">
    <property type="pathway name" value="Proton-coupled monocarboxylate transport"/>
</dbReference>
<dbReference type="Reactome" id="R-RNO-9749641">
    <property type="pathway name" value="Aspirin ADME"/>
</dbReference>
<dbReference type="SABIO-RK" id="P53987"/>
<dbReference type="PRO" id="PR:P53987"/>
<dbReference type="Proteomes" id="UP000002494">
    <property type="component" value="Chromosome 2"/>
</dbReference>
<dbReference type="Bgee" id="ENSRNOG00000019996">
    <property type="expression patterns" value="Expressed in heart and 19 other cell types or tissues"/>
</dbReference>
<dbReference type="GO" id="GO:0016324">
    <property type="term" value="C:apical plasma membrane"/>
    <property type="evidence" value="ECO:0000314"/>
    <property type="project" value="ARUK-UCL"/>
</dbReference>
<dbReference type="GO" id="GO:0009925">
    <property type="term" value="C:basal plasma membrane"/>
    <property type="evidence" value="ECO:0000266"/>
    <property type="project" value="RGD"/>
</dbReference>
<dbReference type="GO" id="GO:0016323">
    <property type="term" value="C:basolateral plasma membrane"/>
    <property type="evidence" value="ECO:0000314"/>
    <property type="project" value="UniProtKB"/>
</dbReference>
<dbReference type="GO" id="GO:0005813">
    <property type="term" value="C:centrosome"/>
    <property type="evidence" value="ECO:0000266"/>
    <property type="project" value="RGD"/>
</dbReference>
<dbReference type="GO" id="GO:0043231">
    <property type="term" value="C:intracellular membrane-bounded organelle"/>
    <property type="evidence" value="ECO:0007669"/>
    <property type="project" value="Ensembl"/>
</dbReference>
<dbReference type="GO" id="GO:0016328">
    <property type="term" value="C:lateral plasma membrane"/>
    <property type="evidence" value="ECO:0000266"/>
    <property type="project" value="RGD"/>
</dbReference>
<dbReference type="GO" id="GO:0005886">
    <property type="term" value="C:plasma membrane"/>
    <property type="evidence" value="ECO:0000314"/>
    <property type="project" value="UniProtKB"/>
</dbReference>
<dbReference type="GO" id="GO:0045202">
    <property type="term" value="C:synapse"/>
    <property type="evidence" value="ECO:0000266"/>
    <property type="project" value="RGD"/>
</dbReference>
<dbReference type="GO" id="GO:0046943">
    <property type="term" value="F:carboxylic acid transmembrane transporter activity"/>
    <property type="evidence" value="ECO:0000315"/>
    <property type="project" value="ARUK-UCL"/>
</dbReference>
<dbReference type="GO" id="GO:0042802">
    <property type="term" value="F:identical protein binding"/>
    <property type="evidence" value="ECO:0000353"/>
    <property type="project" value="RGD"/>
</dbReference>
<dbReference type="GO" id="GO:0015129">
    <property type="term" value="F:lactate transmembrane transporter activity"/>
    <property type="evidence" value="ECO:0000266"/>
    <property type="project" value="RGD"/>
</dbReference>
<dbReference type="GO" id="GO:0015650">
    <property type="term" value="F:lactate:proton symporter activity"/>
    <property type="evidence" value="ECO:0000314"/>
    <property type="project" value="UniProtKB"/>
</dbReference>
<dbReference type="GO" id="GO:0008028">
    <property type="term" value="F:monocarboxylic acid transmembrane transporter activity"/>
    <property type="evidence" value="ECO:0000314"/>
    <property type="project" value="ARUK-UCL"/>
</dbReference>
<dbReference type="GO" id="GO:0015295">
    <property type="term" value="F:solute:proton symporter activity"/>
    <property type="evidence" value="ECO:0000314"/>
    <property type="project" value="UniProtKB"/>
</dbReference>
<dbReference type="GO" id="GO:0015141">
    <property type="term" value="F:succinate transmembrane transporter activity"/>
    <property type="evidence" value="ECO:0000250"/>
    <property type="project" value="UniProtKB"/>
</dbReference>
<dbReference type="GO" id="GO:0051780">
    <property type="term" value="P:behavioral response to nutrient"/>
    <property type="evidence" value="ECO:0000266"/>
    <property type="project" value="RGD"/>
</dbReference>
<dbReference type="GO" id="GO:1905039">
    <property type="term" value="P:carboxylic acid transmembrane transport"/>
    <property type="evidence" value="ECO:0000315"/>
    <property type="project" value="ARUK-UCL"/>
</dbReference>
<dbReference type="GO" id="GO:0007098">
    <property type="term" value="P:centrosome cycle"/>
    <property type="evidence" value="ECO:0000266"/>
    <property type="project" value="RGD"/>
</dbReference>
<dbReference type="GO" id="GO:0042593">
    <property type="term" value="P:glucose homeostasis"/>
    <property type="evidence" value="ECO:0000266"/>
    <property type="project" value="RGD"/>
</dbReference>
<dbReference type="GO" id="GO:0035873">
    <property type="term" value="P:lactate transmembrane transport"/>
    <property type="evidence" value="ECO:0000315"/>
    <property type="project" value="RGD"/>
</dbReference>
<dbReference type="GO" id="GO:0006629">
    <property type="term" value="P:lipid metabolic process"/>
    <property type="evidence" value="ECO:0000266"/>
    <property type="project" value="RGD"/>
</dbReference>
<dbReference type="GO" id="GO:0015718">
    <property type="term" value="P:monocarboxylic acid transport"/>
    <property type="evidence" value="ECO:0000314"/>
    <property type="project" value="ARUK-UCL"/>
</dbReference>
<dbReference type="GO" id="GO:0035879">
    <property type="term" value="P:plasma membrane lactate transport"/>
    <property type="evidence" value="ECO:0000314"/>
    <property type="project" value="RGD"/>
</dbReference>
<dbReference type="GO" id="GO:0042867">
    <property type="term" value="P:pyruvate catabolic process"/>
    <property type="evidence" value="ECO:0000266"/>
    <property type="project" value="RGD"/>
</dbReference>
<dbReference type="GO" id="GO:1901475">
    <property type="term" value="P:pyruvate transmembrane transport"/>
    <property type="evidence" value="ECO:0000314"/>
    <property type="project" value="UniProtKB"/>
</dbReference>
<dbReference type="GO" id="GO:0050796">
    <property type="term" value="P:regulation of insulin secretion"/>
    <property type="evidence" value="ECO:0000266"/>
    <property type="project" value="RGD"/>
</dbReference>
<dbReference type="GO" id="GO:0032094">
    <property type="term" value="P:response to food"/>
    <property type="evidence" value="ECO:0000266"/>
    <property type="project" value="RGD"/>
</dbReference>
<dbReference type="GO" id="GO:0071422">
    <property type="term" value="P:succinate transmembrane transport"/>
    <property type="evidence" value="ECO:0000250"/>
    <property type="project" value="UniProtKB"/>
</dbReference>
<dbReference type="CDD" id="cd17426">
    <property type="entry name" value="MFS_MCT1"/>
    <property type="match status" value="1"/>
</dbReference>
<dbReference type="FunFam" id="1.20.1250.20:FF:000030">
    <property type="entry name" value="monocarboxylate transporter 1 isoform X1"/>
    <property type="match status" value="1"/>
</dbReference>
<dbReference type="Gene3D" id="1.20.1250.20">
    <property type="entry name" value="MFS general substrate transporter like domains"/>
    <property type="match status" value="1"/>
</dbReference>
<dbReference type="InterPro" id="IPR004743">
    <property type="entry name" value="MCT"/>
</dbReference>
<dbReference type="InterPro" id="IPR011701">
    <property type="entry name" value="MFS"/>
</dbReference>
<dbReference type="InterPro" id="IPR020846">
    <property type="entry name" value="MFS_dom"/>
</dbReference>
<dbReference type="InterPro" id="IPR036259">
    <property type="entry name" value="MFS_trans_sf"/>
</dbReference>
<dbReference type="InterPro" id="IPR050327">
    <property type="entry name" value="Proton-linked_MCT"/>
</dbReference>
<dbReference type="NCBIfam" id="TIGR00892">
    <property type="entry name" value="2A0113"/>
    <property type="match status" value="1"/>
</dbReference>
<dbReference type="PANTHER" id="PTHR11360">
    <property type="entry name" value="MONOCARBOXYLATE TRANSPORTER"/>
    <property type="match status" value="1"/>
</dbReference>
<dbReference type="PANTHER" id="PTHR11360:SF24">
    <property type="entry name" value="MONOCARBOXYLATE TRANSPORTER 1"/>
    <property type="match status" value="1"/>
</dbReference>
<dbReference type="Pfam" id="PF07690">
    <property type="entry name" value="MFS_1"/>
    <property type="match status" value="1"/>
</dbReference>
<dbReference type="SUPFAM" id="SSF103473">
    <property type="entry name" value="MFS general substrate transporter"/>
    <property type="match status" value="1"/>
</dbReference>
<dbReference type="PROSITE" id="PS50850">
    <property type="entry name" value="MFS"/>
    <property type="match status" value="1"/>
</dbReference>
<gene>
    <name type="primary">Slc16a1</name>
    <name type="synonym">Mct1</name>
</gene>
<sequence>MPPAIGGPVGYTPPDGGWGWAVVVGAFISIGFSYAFPKSITVFFKEIEIIFSATTSEVSWISSIMLAVMYAGGPISSILVNKYGSRPVMIAGGCLSGCGLIAASFCNTVQELYFCIGVIGGLGLAFNLNPALTMIGKYFYKKRPLANGLAMAGSPVFLSTLAPLNQAFFGIFGWRGSFLILGGLLLNCCVAGSLMRPIGPQQGKVEKLKSKESLQEAGKSDANTDLIGGSPKGEKLSVFQTVNKFLDLSLFTHRGFLLYLSGNVVMFFGLFTPLVFLSNYGKSKHFSSEKSAFLLSILAFVDMVARPSMGLAANTRWIRPRVQYFFAASVVANGVCHLLAPLSTTYVGFCIYAGVFGFAFGWLSSVLFETLMDLVGPQRFSSAVGLVTIVECCPVLLGPPLLGRLNDMYGDYKYTYWACGVILIIAGLYLFIGMGINYRLVAKEQKAEEKKRDGKEDETSTDVDEKPKKTMKETQSPAPLQNSSGDPAEEESPV</sequence>
<keyword id="KW-1003">Cell membrane</keyword>
<keyword id="KW-0472">Membrane</keyword>
<keyword id="KW-0597">Phosphoprotein</keyword>
<keyword id="KW-1185">Reference proteome</keyword>
<keyword id="KW-0769">Symport</keyword>
<keyword id="KW-0812">Transmembrane</keyword>
<keyword id="KW-1133">Transmembrane helix</keyword>
<keyword id="KW-0813">Transport</keyword>
<comment type="function">
    <text evidence="1 2 4 5 6 7 8 9 11 12">Bidirectional proton-coupled monocarboxylate transporter. Catalyzes the rapid transport across the plasma membrane of many monocarboxylates such as lactate, pyruvate, acetate and the ketone bodies acetoacetate and beta-hydroxybutyrate, and thus contributes to the maintenance of intracellular pH. The transport direction is determined by the proton motive force and the concentration gradient of the substrate monocarboxylate. MCT1 is a major lactate exporter (PubMed:10417314, PubMed:10564700, PubMed:11719518, PubMed:17127621, PubMed:19473976, PubMed:8526936, PubMed:9374487, PubMed:9639576). Plays a role in cellular responses to a high-fat diet by modulating the cellular levels of lactate and pyruvate that contribute to the regulation of central metabolic pathways and insulin secretion, with concomitant effects on plasma insulin levels and blood glucose homeostasis (By similarity). Facilitates the protonated monocarboxylate form of succinate export, that its transient protonation upon muscle cell acidification in exercising muscle and ischemic heart. Functions via alternate outward- and inward-open conformation states. Protonation and deprotonation of 302-Asp is essential for the conformational transition (By similarity).</text>
</comment>
<comment type="catalytic activity">
    <reaction evidence="4 5 7 8 9 11 12">
        <text>(S)-lactate(in) + H(+)(in) = (S)-lactate(out) + H(+)(out)</text>
        <dbReference type="Rhea" id="RHEA:29415"/>
        <dbReference type="ChEBI" id="CHEBI:15378"/>
        <dbReference type="ChEBI" id="CHEBI:16651"/>
    </reaction>
    <physiologicalReaction direction="left-to-right" evidence="14">
        <dbReference type="Rhea" id="RHEA:29416"/>
    </physiologicalReaction>
    <physiologicalReaction direction="right-to-left" evidence="14">
        <dbReference type="Rhea" id="RHEA:29417"/>
    </physiologicalReaction>
</comment>
<comment type="catalytic activity">
    <reaction evidence="4 11 12">
        <text>pyruvate(out) + H(+)(out) = pyruvate(in) + H(+)(in)</text>
        <dbReference type="Rhea" id="RHEA:64720"/>
        <dbReference type="ChEBI" id="CHEBI:15361"/>
        <dbReference type="ChEBI" id="CHEBI:15378"/>
    </reaction>
    <physiologicalReaction direction="left-to-right" evidence="14">
        <dbReference type="Rhea" id="RHEA:64721"/>
    </physiologicalReaction>
    <physiologicalReaction direction="right-to-left" evidence="14">
        <dbReference type="Rhea" id="RHEA:64722"/>
    </physiologicalReaction>
</comment>
<comment type="catalytic activity">
    <reaction evidence="4 12">
        <text>acetoacetate(out) + H(+)(out) = acetoacetate(in) + H(+)(in)</text>
        <dbReference type="Rhea" id="RHEA:71775"/>
        <dbReference type="ChEBI" id="CHEBI:13705"/>
        <dbReference type="ChEBI" id="CHEBI:15378"/>
    </reaction>
    <physiologicalReaction direction="left-to-right" evidence="14">
        <dbReference type="Rhea" id="RHEA:71776"/>
    </physiologicalReaction>
    <physiologicalReaction direction="right-to-left" evidence="14">
        <dbReference type="Rhea" id="RHEA:71777"/>
    </physiologicalReaction>
</comment>
<comment type="catalytic activity">
    <reaction evidence="4 12">
        <text>(S)-3-hydroxybutanoate(out) + H(+)(out) = (S)-3-hydroxybutanoate(in) + H(+)(in)</text>
        <dbReference type="Rhea" id="RHEA:71871"/>
        <dbReference type="ChEBI" id="CHEBI:11047"/>
        <dbReference type="ChEBI" id="CHEBI:15378"/>
    </reaction>
    <physiologicalReaction direction="left-to-right" evidence="14">
        <dbReference type="Rhea" id="RHEA:71872"/>
    </physiologicalReaction>
    <physiologicalReaction direction="right-to-left" evidence="14">
        <dbReference type="Rhea" id="RHEA:71873"/>
    </physiologicalReaction>
</comment>
<comment type="catalytic activity">
    <reaction evidence="4 14">
        <text>(R)-3-hydroxybutanoate(out) + H(+)(out) = (R)-3-hydroxybutanoate(in) + H(+)(in)</text>
        <dbReference type="Rhea" id="RHEA:71795"/>
        <dbReference type="ChEBI" id="CHEBI:10983"/>
        <dbReference type="ChEBI" id="CHEBI:15378"/>
    </reaction>
    <physiologicalReaction direction="left-to-right" evidence="14">
        <dbReference type="Rhea" id="RHEA:71796"/>
    </physiologicalReaction>
    <physiologicalReaction direction="right-to-left" evidence="14">
        <dbReference type="Rhea" id="RHEA:71797"/>
    </physiologicalReaction>
</comment>
<comment type="catalytic activity">
    <reaction evidence="4">
        <text>3-methyl-2-oxobutanoate(out) + H(+)(out) = 3-methyl-2-oxobutanoate(in) + H(+)(in)</text>
        <dbReference type="Rhea" id="RHEA:71783"/>
        <dbReference type="ChEBI" id="CHEBI:11851"/>
        <dbReference type="ChEBI" id="CHEBI:15378"/>
    </reaction>
</comment>
<comment type="catalytic activity">
    <reaction evidence="4">
        <text>4-methyl-2-oxopentanoate(out) + H(+)(out) = 4-methyl-2-oxopentanoate(in) + H(+)(in)</text>
        <dbReference type="Rhea" id="RHEA:71779"/>
        <dbReference type="ChEBI" id="CHEBI:15378"/>
        <dbReference type="ChEBI" id="CHEBI:17865"/>
    </reaction>
</comment>
<comment type="activity regulation">
    <text evidence="8">Inhibited by stilbene disulfonates, such as di-isothiocyanostilbene disulfonate(DIDS), a cross-linking reagent that forms covalent linkages with lysine groups.</text>
</comment>
<comment type="biophysicochemical properties">
    <kinetics>
        <KM evidence="7 12">3.5 mM for (S)-lactate</KM>
        <KM evidence="12">1.25 mM for pyruvate</KM>
    </kinetics>
</comment>
<comment type="subunit">
    <text evidence="6 7 8 10">Interacts with BSG. Interacts with EMB. Interaction with either BSG or EMB is required for expression at the cell membrane.</text>
</comment>
<comment type="subcellular location">
    <subcellularLocation>
        <location evidence="6 7 8 9 10">Cell membrane</location>
        <topology evidence="1">Multi-pass membrane protein</topology>
    </subcellularLocation>
    <subcellularLocation>
        <location evidence="5">Basolateral cell membrane</location>
        <topology evidence="1">Multi-pass membrane protein</topology>
    </subcellularLocation>
    <subcellularLocation>
        <location evidence="1">Apical cell membrane</location>
        <topology evidence="1">Multi-pass membrane protein</topology>
    </subcellularLocation>
    <text evidence="1">Expression at the cell surface requires the ancillary proteins BSG and EMB.</text>
</comment>
<comment type="tissue specificity">
    <text evidence="5 8 9 10">Detected in erythrocytes (at protein level). Detected in brain, heart, kidney, lung, muscle, jejunum enterocytes and brain capillaries.</text>
</comment>
<comment type="similarity">
    <text evidence="13">Belongs to the major facilitator superfamily. Monocarboxylate porter (TC 2.A.1.13) family.</text>
</comment>
<protein>
    <recommendedName>
        <fullName>Monocarboxylate transporter 1</fullName>
        <shortName>MCT 1</shortName>
    </recommendedName>
    <alternativeName>
        <fullName>Solute carrier family 16 member 1</fullName>
    </alternativeName>
</protein>